<accession>B7MPF2</accession>
<proteinExistence type="inferred from homology"/>
<protein>
    <recommendedName>
        <fullName evidence="1">Pyrimidine/purine nucleoside phosphorylase</fullName>
        <ecNumber evidence="1">2.4.2.1</ecNumber>
        <ecNumber evidence="1">2.4.2.2</ecNumber>
    </recommendedName>
    <alternativeName>
        <fullName evidence="1">Adenosine phosphorylase</fullName>
    </alternativeName>
    <alternativeName>
        <fullName evidence="1">Cytidine phosphorylase</fullName>
    </alternativeName>
    <alternativeName>
        <fullName evidence="1">Guanosine phosphorylase</fullName>
    </alternativeName>
    <alternativeName>
        <fullName evidence="1">Inosine phosphorylase</fullName>
    </alternativeName>
    <alternativeName>
        <fullName evidence="1">Thymidine phosphorylase</fullName>
    </alternativeName>
    <alternativeName>
        <fullName evidence="1">Uridine phosphorylase</fullName>
    </alternativeName>
    <alternativeName>
        <fullName evidence="1">Xanthosine phosphorylase</fullName>
    </alternativeName>
</protein>
<dbReference type="EC" id="2.4.2.1" evidence="1"/>
<dbReference type="EC" id="2.4.2.2" evidence="1"/>
<dbReference type="EMBL" id="CU928162">
    <property type="protein sequence ID" value="CAR06624.1"/>
    <property type="molecule type" value="Genomic_DNA"/>
</dbReference>
<dbReference type="RefSeq" id="WP_000941942.1">
    <property type="nucleotide sequence ID" value="NC_011745.1"/>
</dbReference>
<dbReference type="SMR" id="B7MPF2"/>
<dbReference type="GeneID" id="93777070"/>
<dbReference type="KEGG" id="ecq:ECED1_0414"/>
<dbReference type="HOGENOM" id="CLU_157874_0_0_6"/>
<dbReference type="Proteomes" id="UP000000748">
    <property type="component" value="Chromosome"/>
</dbReference>
<dbReference type="GO" id="GO:0005829">
    <property type="term" value="C:cytosol"/>
    <property type="evidence" value="ECO:0007669"/>
    <property type="project" value="TreeGrafter"/>
</dbReference>
<dbReference type="GO" id="GO:0047975">
    <property type="term" value="F:guanosine phosphorylase activity"/>
    <property type="evidence" value="ECO:0007669"/>
    <property type="project" value="UniProtKB-EC"/>
</dbReference>
<dbReference type="GO" id="GO:0004731">
    <property type="term" value="F:purine-nucleoside phosphorylase activity"/>
    <property type="evidence" value="ECO:0007669"/>
    <property type="project" value="UniProtKB-UniRule"/>
</dbReference>
<dbReference type="GO" id="GO:0009032">
    <property type="term" value="F:thymidine phosphorylase activity"/>
    <property type="evidence" value="ECO:0007669"/>
    <property type="project" value="UniProtKB-EC"/>
</dbReference>
<dbReference type="GO" id="GO:0004850">
    <property type="term" value="F:uridine phosphorylase activity"/>
    <property type="evidence" value="ECO:0007669"/>
    <property type="project" value="UniProtKB-EC"/>
</dbReference>
<dbReference type="CDD" id="cd20296">
    <property type="entry name" value="cupin_PpnP-like"/>
    <property type="match status" value="1"/>
</dbReference>
<dbReference type="FunFam" id="2.60.120.10:FF:000016">
    <property type="entry name" value="Pyrimidine/purine nucleoside phosphorylase"/>
    <property type="match status" value="1"/>
</dbReference>
<dbReference type="Gene3D" id="2.60.120.10">
    <property type="entry name" value="Jelly Rolls"/>
    <property type="match status" value="1"/>
</dbReference>
<dbReference type="HAMAP" id="MF_01537">
    <property type="entry name" value="Nucleos_phosphorylase_PpnP"/>
    <property type="match status" value="1"/>
</dbReference>
<dbReference type="InterPro" id="IPR009664">
    <property type="entry name" value="Ppnp"/>
</dbReference>
<dbReference type="InterPro" id="IPR014710">
    <property type="entry name" value="RmlC-like_jellyroll"/>
</dbReference>
<dbReference type="InterPro" id="IPR011051">
    <property type="entry name" value="RmlC_Cupin_sf"/>
</dbReference>
<dbReference type="NCBIfam" id="NF007875">
    <property type="entry name" value="PRK10579.1"/>
    <property type="match status" value="1"/>
</dbReference>
<dbReference type="PANTHER" id="PTHR36540">
    <property type="entry name" value="PYRIMIDINE/PURINE NUCLEOSIDE PHOSPHORYLASE"/>
    <property type="match status" value="1"/>
</dbReference>
<dbReference type="PANTHER" id="PTHR36540:SF1">
    <property type="entry name" value="PYRIMIDINE_PURINE NUCLEOSIDE PHOSPHORYLASE"/>
    <property type="match status" value="1"/>
</dbReference>
<dbReference type="Pfam" id="PF06865">
    <property type="entry name" value="Ppnp"/>
    <property type="match status" value="1"/>
</dbReference>
<dbReference type="SUPFAM" id="SSF51182">
    <property type="entry name" value="RmlC-like cupins"/>
    <property type="match status" value="1"/>
</dbReference>
<comment type="function">
    <text evidence="1">Catalyzes the phosphorolysis of diverse nucleosides, yielding D-ribose 1-phosphate and the respective free bases. Can use uridine, adenosine, guanosine, cytidine, thymidine, inosine and xanthosine as substrates. Also catalyzes the reverse reactions.</text>
</comment>
<comment type="catalytic activity">
    <reaction evidence="1">
        <text>a purine D-ribonucleoside + phosphate = a purine nucleobase + alpha-D-ribose 1-phosphate</text>
        <dbReference type="Rhea" id="RHEA:19805"/>
        <dbReference type="ChEBI" id="CHEBI:26386"/>
        <dbReference type="ChEBI" id="CHEBI:43474"/>
        <dbReference type="ChEBI" id="CHEBI:57720"/>
        <dbReference type="ChEBI" id="CHEBI:142355"/>
        <dbReference type="EC" id="2.4.2.1"/>
    </reaction>
</comment>
<comment type="catalytic activity">
    <reaction evidence="1">
        <text>adenosine + phosphate = alpha-D-ribose 1-phosphate + adenine</text>
        <dbReference type="Rhea" id="RHEA:27642"/>
        <dbReference type="ChEBI" id="CHEBI:16335"/>
        <dbReference type="ChEBI" id="CHEBI:16708"/>
        <dbReference type="ChEBI" id="CHEBI:43474"/>
        <dbReference type="ChEBI" id="CHEBI:57720"/>
        <dbReference type="EC" id="2.4.2.1"/>
    </reaction>
</comment>
<comment type="catalytic activity">
    <reaction evidence="1">
        <text>cytidine + phosphate = cytosine + alpha-D-ribose 1-phosphate</text>
        <dbReference type="Rhea" id="RHEA:52540"/>
        <dbReference type="ChEBI" id="CHEBI:16040"/>
        <dbReference type="ChEBI" id="CHEBI:17562"/>
        <dbReference type="ChEBI" id="CHEBI:43474"/>
        <dbReference type="ChEBI" id="CHEBI:57720"/>
        <dbReference type="EC" id="2.4.2.2"/>
    </reaction>
</comment>
<comment type="catalytic activity">
    <reaction evidence="1">
        <text>guanosine + phosphate = alpha-D-ribose 1-phosphate + guanine</text>
        <dbReference type="Rhea" id="RHEA:13233"/>
        <dbReference type="ChEBI" id="CHEBI:16235"/>
        <dbReference type="ChEBI" id="CHEBI:16750"/>
        <dbReference type="ChEBI" id="CHEBI:43474"/>
        <dbReference type="ChEBI" id="CHEBI:57720"/>
        <dbReference type="EC" id="2.4.2.1"/>
    </reaction>
</comment>
<comment type="catalytic activity">
    <reaction evidence="1">
        <text>inosine + phosphate = alpha-D-ribose 1-phosphate + hypoxanthine</text>
        <dbReference type="Rhea" id="RHEA:27646"/>
        <dbReference type="ChEBI" id="CHEBI:17368"/>
        <dbReference type="ChEBI" id="CHEBI:17596"/>
        <dbReference type="ChEBI" id="CHEBI:43474"/>
        <dbReference type="ChEBI" id="CHEBI:57720"/>
        <dbReference type="EC" id="2.4.2.1"/>
    </reaction>
</comment>
<comment type="catalytic activity">
    <reaction evidence="1">
        <text>thymidine + phosphate = 2-deoxy-alpha-D-ribose 1-phosphate + thymine</text>
        <dbReference type="Rhea" id="RHEA:16037"/>
        <dbReference type="ChEBI" id="CHEBI:17748"/>
        <dbReference type="ChEBI" id="CHEBI:17821"/>
        <dbReference type="ChEBI" id="CHEBI:43474"/>
        <dbReference type="ChEBI" id="CHEBI:57259"/>
        <dbReference type="EC" id="2.4.2.2"/>
    </reaction>
</comment>
<comment type="catalytic activity">
    <reaction evidence="1">
        <text>uridine + phosphate = alpha-D-ribose 1-phosphate + uracil</text>
        <dbReference type="Rhea" id="RHEA:24388"/>
        <dbReference type="ChEBI" id="CHEBI:16704"/>
        <dbReference type="ChEBI" id="CHEBI:17568"/>
        <dbReference type="ChEBI" id="CHEBI:43474"/>
        <dbReference type="ChEBI" id="CHEBI:57720"/>
        <dbReference type="EC" id="2.4.2.2"/>
    </reaction>
</comment>
<comment type="catalytic activity">
    <reaction evidence="1">
        <text>xanthosine + phosphate = alpha-D-ribose 1-phosphate + xanthine</text>
        <dbReference type="Rhea" id="RHEA:27638"/>
        <dbReference type="ChEBI" id="CHEBI:17712"/>
        <dbReference type="ChEBI" id="CHEBI:18107"/>
        <dbReference type="ChEBI" id="CHEBI:43474"/>
        <dbReference type="ChEBI" id="CHEBI:57720"/>
        <dbReference type="EC" id="2.4.2.1"/>
    </reaction>
</comment>
<comment type="similarity">
    <text evidence="1">Belongs to the nucleoside phosphorylase PpnP family.</text>
</comment>
<feature type="chain" id="PRO_1000185195" description="Pyrimidine/purine nucleoside phosphorylase">
    <location>
        <begin position="1"/>
        <end position="94"/>
    </location>
</feature>
<name>PPNP_ECO81</name>
<evidence type="ECO:0000255" key="1">
    <source>
        <dbReference type="HAMAP-Rule" id="MF_01537"/>
    </source>
</evidence>
<gene>
    <name evidence="1" type="primary">ppnP</name>
    <name type="ordered locus">ECED1_0414</name>
</gene>
<organism>
    <name type="scientific">Escherichia coli O81 (strain ED1a)</name>
    <dbReference type="NCBI Taxonomy" id="585397"/>
    <lineage>
        <taxon>Bacteria</taxon>
        <taxon>Pseudomonadati</taxon>
        <taxon>Pseudomonadota</taxon>
        <taxon>Gammaproteobacteria</taxon>
        <taxon>Enterobacterales</taxon>
        <taxon>Enterobacteriaceae</taxon>
        <taxon>Escherichia</taxon>
    </lineage>
</organism>
<sequence length="94" mass="10234">MLQSNEYFSGKVKSIGFSSSSTGRASVGVMVEGEYTFSTAEPEEMTVISGALNVLLPDATDWQVYEAGSVFNVPGHSEFHLQVAEPTSYLCRYL</sequence>
<keyword id="KW-0328">Glycosyltransferase</keyword>
<keyword id="KW-0808">Transferase</keyword>
<reference key="1">
    <citation type="journal article" date="2009" name="PLoS Genet.">
        <title>Organised genome dynamics in the Escherichia coli species results in highly diverse adaptive paths.</title>
        <authorList>
            <person name="Touchon M."/>
            <person name="Hoede C."/>
            <person name="Tenaillon O."/>
            <person name="Barbe V."/>
            <person name="Baeriswyl S."/>
            <person name="Bidet P."/>
            <person name="Bingen E."/>
            <person name="Bonacorsi S."/>
            <person name="Bouchier C."/>
            <person name="Bouvet O."/>
            <person name="Calteau A."/>
            <person name="Chiapello H."/>
            <person name="Clermont O."/>
            <person name="Cruveiller S."/>
            <person name="Danchin A."/>
            <person name="Diard M."/>
            <person name="Dossat C."/>
            <person name="Karoui M.E."/>
            <person name="Frapy E."/>
            <person name="Garry L."/>
            <person name="Ghigo J.M."/>
            <person name="Gilles A.M."/>
            <person name="Johnson J."/>
            <person name="Le Bouguenec C."/>
            <person name="Lescat M."/>
            <person name="Mangenot S."/>
            <person name="Martinez-Jehanne V."/>
            <person name="Matic I."/>
            <person name="Nassif X."/>
            <person name="Oztas S."/>
            <person name="Petit M.A."/>
            <person name="Pichon C."/>
            <person name="Rouy Z."/>
            <person name="Ruf C.S."/>
            <person name="Schneider D."/>
            <person name="Tourret J."/>
            <person name="Vacherie B."/>
            <person name="Vallenet D."/>
            <person name="Medigue C."/>
            <person name="Rocha E.P.C."/>
            <person name="Denamur E."/>
        </authorList>
    </citation>
    <scope>NUCLEOTIDE SEQUENCE [LARGE SCALE GENOMIC DNA]</scope>
    <source>
        <strain>ED1a</strain>
    </source>
</reference>